<organism>
    <name type="scientific">Mus musculus</name>
    <name type="common">Mouse</name>
    <dbReference type="NCBI Taxonomy" id="10090"/>
    <lineage>
        <taxon>Eukaryota</taxon>
        <taxon>Metazoa</taxon>
        <taxon>Chordata</taxon>
        <taxon>Craniata</taxon>
        <taxon>Vertebrata</taxon>
        <taxon>Euteleostomi</taxon>
        <taxon>Mammalia</taxon>
        <taxon>Eutheria</taxon>
        <taxon>Euarchontoglires</taxon>
        <taxon>Glires</taxon>
        <taxon>Rodentia</taxon>
        <taxon>Myomorpha</taxon>
        <taxon>Muroidea</taxon>
        <taxon>Muridae</taxon>
        <taxon>Murinae</taxon>
        <taxon>Mus</taxon>
        <taxon>Mus</taxon>
    </lineage>
</organism>
<protein>
    <recommendedName>
        <fullName>Transcription elongation factor A protein-like 8</fullName>
        <shortName>TCEA-like protein 8</shortName>
    </recommendedName>
    <alternativeName>
        <fullName>Transcription elongation factor S-II protein-like 8</fullName>
    </alternativeName>
</protein>
<proteinExistence type="inferred from homology"/>
<gene>
    <name type="primary">Tceal8</name>
</gene>
<evidence type="ECO:0000255" key="1"/>
<evidence type="ECO:0000256" key="2">
    <source>
        <dbReference type="SAM" id="MobiDB-lite"/>
    </source>
</evidence>
<evidence type="ECO:0000305" key="3"/>
<keyword id="KW-0175">Coiled coil</keyword>
<keyword id="KW-0539">Nucleus</keyword>
<keyword id="KW-1185">Reference proteome</keyword>
<keyword id="KW-0804">Transcription</keyword>
<keyword id="KW-0805">Transcription regulation</keyword>
<feature type="chain" id="PRO_0000239217" description="Transcription elongation factor A protein-like 8">
    <location>
        <begin position="1"/>
        <end position="117"/>
    </location>
</feature>
<feature type="region of interest" description="Disordered" evidence="2">
    <location>
        <begin position="1"/>
        <end position="82"/>
    </location>
</feature>
<feature type="coiled-coil region" evidence="1">
    <location>
        <begin position="73"/>
        <end position="100"/>
    </location>
</feature>
<feature type="compositionally biased region" description="Basic and acidic residues" evidence="2">
    <location>
        <begin position="41"/>
        <end position="82"/>
    </location>
</feature>
<feature type="sequence conflict" description="In Ref. 1; BAB29366." evidence="3" ref="1">
    <original>Y</original>
    <variation>S</variation>
    <location>
        <position position="111"/>
    </location>
</feature>
<name>TCAL8_MOUSE</name>
<reference key="1">
    <citation type="journal article" date="2005" name="Science">
        <title>The transcriptional landscape of the mammalian genome.</title>
        <authorList>
            <person name="Carninci P."/>
            <person name="Kasukawa T."/>
            <person name="Katayama S."/>
            <person name="Gough J."/>
            <person name="Frith M.C."/>
            <person name="Maeda N."/>
            <person name="Oyama R."/>
            <person name="Ravasi T."/>
            <person name="Lenhard B."/>
            <person name="Wells C."/>
            <person name="Kodzius R."/>
            <person name="Shimokawa K."/>
            <person name="Bajic V.B."/>
            <person name="Brenner S.E."/>
            <person name="Batalov S."/>
            <person name="Forrest A.R."/>
            <person name="Zavolan M."/>
            <person name="Davis M.J."/>
            <person name="Wilming L.G."/>
            <person name="Aidinis V."/>
            <person name="Allen J.E."/>
            <person name="Ambesi-Impiombato A."/>
            <person name="Apweiler R."/>
            <person name="Aturaliya R.N."/>
            <person name="Bailey T.L."/>
            <person name="Bansal M."/>
            <person name="Baxter L."/>
            <person name="Beisel K.W."/>
            <person name="Bersano T."/>
            <person name="Bono H."/>
            <person name="Chalk A.M."/>
            <person name="Chiu K.P."/>
            <person name="Choudhary V."/>
            <person name="Christoffels A."/>
            <person name="Clutterbuck D.R."/>
            <person name="Crowe M.L."/>
            <person name="Dalla E."/>
            <person name="Dalrymple B.P."/>
            <person name="de Bono B."/>
            <person name="Della Gatta G."/>
            <person name="di Bernardo D."/>
            <person name="Down T."/>
            <person name="Engstrom P."/>
            <person name="Fagiolini M."/>
            <person name="Faulkner G."/>
            <person name="Fletcher C.F."/>
            <person name="Fukushima T."/>
            <person name="Furuno M."/>
            <person name="Futaki S."/>
            <person name="Gariboldi M."/>
            <person name="Georgii-Hemming P."/>
            <person name="Gingeras T.R."/>
            <person name="Gojobori T."/>
            <person name="Green R.E."/>
            <person name="Gustincich S."/>
            <person name="Harbers M."/>
            <person name="Hayashi Y."/>
            <person name="Hensch T.K."/>
            <person name="Hirokawa N."/>
            <person name="Hill D."/>
            <person name="Huminiecki L."/>
            <person name="Iacono M."/>
            <person name="Ikeo K."/>
            <person name="Iwama A."/>
            <person name="Ishikawa T."/>
            <person name="Jakt M."/>
            <person name="Kanapin A."/>
            <person name="Katoh M."/>
            <person name="Kawasawa Y."/>
            <person name="Kelso J."/>
            <person name="Kitamura H."/>
            <person name="Kitano H."/>
            <person name="Kollias G."/>
            <person name="Krishnan S.P."/>
            <person name="Kruger A."/>
            <person name="Kummerfeld S.K."/>
            <person name="Kurochkin I.V."/>
            <person name="Lareau L.F."/>
            <person name="Lazarevic D."/>
            <person name="Lipovich L."/>
            <person name="Liu J."/>
            <person name="Liuni S."/>
            <person name="McWilliam S."/>
            <person name="Madan Babu M."/>
            <person name="Madera M."/>
            <person name="Marchionni L."/>
            <person name="Matsuda H."/>
            <person name="Matsuzawa S."/>
            <person name="Miki H."/>
            <person name="Mignone F."/>
            <person name="Miyake S."/>
            <person name="Morris K."/>
            <person name="Mottagui-Tabar S."/>
            <person name="Mulder N."/>
            <person name="Nakano N."/>
            <person name="Nakauchi H."/>
            <person name="Ng P."/>
            <person name="Nilsson R."/>
            <person name="Nishiguchi S."/>
            <person name="Nishikawa S."/>
            <person name="Nori F."/>
            <person name="Ohara O."/>
            <person name="Okazaki Y."/>
            <person name="Orlando V."/>
            <person name="Pang K.C."/>
            <person name="Pavan W.J."/>
            <person name="Pavesi G."/>
            <person name="Pesole G."/>
            <person name="Petrovsky N."/>
            <person name="Piazza S."/>
            <person name="Reed J."/>
            <person name="Reid J.F."/>
            <person name="Ring B.Z."/>
            <person name="Ringwald M."/>
            <person name="Rost B."/>
            <person name="Ruan Y."/>
            <person name="Salzberg S.L."/>
            <person name="Sandelin A."/>
            <person name="Schneider C."/>
            <person name="Schoenbach C."/>
            <person name="Sekiguchi K."/>
            <person name="Semple C.A."/>
            <person name="Seno S."/>
            <person name="Sessa L."/>
            <person name="Sheng Y."/>
            <person name="Shibata Y."/>
            <person name="Shimada H."/>
            <person name="Shimada K."/>
            <person name="Silva D."/>
            <person name="Sinclair B."/>
            <person name="Sperling S."/>
            <person name="Stupka E."/>
            <person name="Sugiura K."/>
            <person name="Sultana R."/>
            <person name="Takenaka Y."/>
            <person name="Taki K."/>
            <person name="Tammoja K."/>
            <person name="Tan S.L."/>
            <person name="Tang S."/>
            <person name="Taylor M.S."/>
            <person name="Tegner J."/>
            <person name="Teichmann S.A."/>
            <person name="Ueda H.R."/>
            <person name="van Nimwegen E."/>
            <person name="Verardo R."/>
            <person name="Wei C.L."/>
            <person name="Yagi K."/>
            <person name="Yamanishi H."/>
            <person name="Zabarovsky E."/>
            <person name="Zhu S."/>
            <person name="Zimmer A."/>
            <person name="Hide W."/>
            <person name="Bult C."/>
            <person name="Grimmond S.M."/>
            <person name="Teasdale R.D."/>
            <person name="Liu E.T."/>
            <person name="Brusic V."/>
            <person name="Quackenbush J."/>
            <person name="Wahlestedt C."/>
            <person name="Mattick J.S."/>
            <person name="Hume D.A."/>
            <person name="Kai C."/>
            <person name="Sasaki D."/>
            <person name="Tomaru Y."/>
            <person name="Fukuda S."/>
            <person name="Kanamori-Katayama M."/>
            <person name="Suzuki M."/>
            <person name="Aoki J."/>
            <person name="Arakawa T."/>
            <person name="Iida J."/>
            <person name="Imamura K."/>
            <person name="Itoh M."/>
            <person name="Kato T."/>
            <person name="Kawaji H."/>
            <person name="Kawagashira N."/>
            <person name="Kawashima T."/>
            <person name="Kojima M."/>
            <person name="Kondo S."/>
            <person name="Konno H."/>
            <person name="Nakano K."/>
            <person name="Ninomiya N."/>
            <person name="Nishio T."/>
            <person name="Okada M."/>
            <person name="Plessy C."/>
            <person name="Shibata K."/>
            <person name="Shiraki T."/>
            <person name="Suzuki S."/>
            <person name="Tagami M."/>
            <person name="Waki K."/>
            <person name="Watahiki A."/>
            <person name="Okamura-Oho Y."/>
            <person name="Suzuki H."/>
            <person name="Kawai J."/>
            <person name="Hayashizaki Y."/>
        </authorList>
    </citation>
    <scope>NUCLEOTIDE SEQUENCE [LARGE SCALE MRNA]</scope>
    <source>
        <strain>C57BL/6J</strain>
        <strain>NOD</strain>
        <tissue>Embryo</tissue>
        <tissue>Spleen</tissue>
    </source>
</reference>
<reference key="2">
    <citation type="journal article" date="2009" name="PLoS Biol.">
        <title>Lineage-specific biology revealed by a finished genome assembly of the mouse.</title>
        <authorList>
            <person name="Church D.M."/>
            <person name="Goodstadt L."/>
            <person name="Hillier L.W."/>
            <person name="Zody M.C."/>
            <person name="Goldstein S."/>
            <person name="She X."/>
            <person name="Bult C.J."/>
            <person name="Agarwala R."/>
            <person name="Cherry J.L."/>
            <person name="DiCuccio M."/>
            <person name="Hlavina W."/>
            <person name="Kapustin Y."/>
            <person name="Meric P."/>
            <person name="Maglott D."/>
            <person name="Birtle Z."/>
            <person name="Marques A.C."/>
            <person name="Graves T."/>
            <person name="Zhou S."/>
            <person name="Teague B."/>
            <person name="Potamousis K."/>
            <person name="Churas C."/>
            <person name="Place M."/>
            <person name="Herschleb J."/>
            <person name="Runnheim R."/>
            <person name="Forrest D."/>
            <person name="Amos-Landgraf J."/>
            <person name="Schwartz D.C."/>
            <person name="Cheng Z."/>
            <person name="Lindblad-Toh K."/>
            <person name="Eichler E.E."/>
            <person name="Ponting C.P."/>
        </authorList>
    </citation>
    <scope>NUCLEOTIDE SEQUENCE [LARGE SCALE GENOMIC DNA]</scope>
    <source>
        <strain>C57BL/6J</strain>
    </source>
</reference>
<reference key="3">
    <citation type="journal article" date="2004" name="Genome Res.">
        <title>The status, quality, and expansion of the NIH full-length cDNA project: the Mammalian Gene Collection (MGC).</title>
        <authorList>
            <consortium name="The MGC Project Team"/>
        </authorList>
    </citation>
    <scope>NUCLEOTIDE SEQUENCE [LARGE SCALE MRNA]</scope>
    <source>
        <strain>Czech II</strain>
        <tissue>Mammary tumor</tissue>
    </source>
</reference>
<dbReference type="EMBL" id="AK012030">
    <property type="protein sequence ID" value="BAB27984.1"/>
    <property type="molecule type" value="mRNA"/>
</dbReference>
<dbReference type="EMBL" id="AK014459">
    <property type="protein sequence ID" value="BAB29366.1"/>
    <property type="molecule type" value="mRNA"/>
</dbReference>
<dbReference type="EMBL" id="AK137039">
    <property type="protein sequence ID" value="BAE23212.1"/>
    <property type="molecule type" value="mRNA"/>
</dbReference>
<dbReference type="EMBL" id="AK156414">
    <property type="protein sequence ID" value="BAE33705.1"/>
    <property type="molecule type" value="mRNA"/>
</dbReference>
<dbReference type="EMBL" id="AL772180">
    <property type="status" value="NOT_ANNOTATED_CDS"/>
    <property type="molecule type" value="Genomic_DNA"/>
</dbReference>
<dbReference type="EMBL" id="BC027269">
    <property type="protein sequence ID" value="AAH27269.1"/>
    <property type="molecule type" value="mRNA"/>
</dbReference>
<dbReference type="CCDS" id="CCDS30415.1"/>
<dbReference type="RefSeq" id="NP_001162050.1">
    <property type="nucleotide sequence ID" value="NM_001168578.1"/>
</dbReference>
<dbReference type="RefSeq" id="NP_079979.2">
    <property type="nucleotide sequence ID" value="NM_025703.3"/>
</dbReference>
<dbReference type="BioGRID" id="211644">
    <property type="interactions" value="2"/>
</dbReference>
<dbReference type="FunCoup" id="Q9CZY2">
    <property type="interactions" value="73"/>
</dbReference>
<dbReference type="STRING" id="10090.ENSMUSP00000129591"/>
<dbReference type="PhosphoSitePlus" id="Q9CZY2"/>
<dbReference type="PaxDb" id="10090-ENSMUSP00000056189"/>
<dbReference type="ProteomicsDB" id="263142"/>
<dbReference type="Pumba" id="Q9CZY2"/>
<dbReference type="Antibodypedia" id="55458">
    <property type="antibodies" value="85 antibodies from 22 providers"/>
</dbReference>
<dbReference type="DNASU" id="66684"/>
<dbReference type="Ensembl" id="ENSMUST00000060101.10">
    <property type="protein sequence ID" value="ENSMUSP00000056189.4"/>
    <property type="gene ID" value="ENSMUSG00000051579.11"/>
</dbReference>
<dbReference type="Ensembl" id="ENSMUST00000163584.8">
    <property type="protein sequence ID" value="ENSMUSP00000129591.2"/>
    <property type="gene ID" value="ENSMUSG00000051579.11"/>
</dbReference>
<dbReference type="GeneID" id="66684"/>
<dbReference type="KEGG" id="mmu:66684"/>
<dbReference type="UCSC" id="uc009uie.2">
    <property type="organism name" value="mouse"/>
</dbReference>
<dbReference type="AGR" id="MGI:1913934"/>
<dbReference type="CTD" id="90843"/>
<dbReference type="MGI" id="MGI:1913934">
    <property type="gene designation" value="Tceal8"/>
</dbReference>
<dbReference type="VEuPathDB" id="HostDB:ENSMUSG00000051579"/>
<dbReference type="eggNOG" id="ENOG502R12B">
    <property type="taxonomic scope" value="Eukaryota"/>
</dbReference>
<dbReference type="GeneTree" id="ENSGT00950000183164"/>
<dbReference type="HOGENOM" id="CLU_181913_0_0_1"/>
<dbReference type="InParanoid" id="Q9CZY2"/>
<dbReference type="OMA" id="QTSCEEN"/>
<dbReference type="OrthoDB" id="9825341at2759"/>
<dbReference type="PhylomeDB" id="Q9CZY2"/>
<dbReference type="BioGRID-ORCS" id="66684">
    <property type="hits" value="2 hits in 77 CRISPR screens"/>
</dbReference>
<dbReference type="ChiTaRS" id="Tceal8">
    <property type="organism name" value="mouse"/>
</dbReference>
<dbReference type="PRO" id="PR:Q9CZY2"/>
<dbReference type="Proteomes" id="UP000000589">
    <property type="component" value="Chromosome X"/>
</dbReference>
<dbReference type="RNAct" id="Q9CZY2">
    <property type="molecule type" value="protein"/>
</dbReference>
<dbReference type="Bgee" id="ENSMUSG00000051579">
    <property type="expression patterns" value="Expressed in atrioventricular valve and 246 other cell types or tissues"/>
</dbReference>
<dbReference type="ExpressionAtlas" id="Q9CZY2">
    <property type="expression patterns" value="baseline and differential"/>
</dbReference>
<dbReference type="GO" id="GO:0005634">
    <property type="term" value="C:nucleus"/>
    <property type="evidence" value="ECO:0007669"/>
    <property type="project" value="UniProtKB-SubCell"/>
</dbReference>
<dbReference type="InterPro" id="IPR021156">
    <property type="entry name" value="TF_A-like/BEX"/>
</dbReference>
<dbReference type="Pfam" id="PF04538">
    <property type="entry name" value="BEX"/>
    <property type="match status" value="1"/>
</dbReference>
<comment type="function">
    <text>May be involved in transcriptional regulation.</text>
</comment>
<comment type="subcellular location">
    <subcellularLocation>
        <location evidence="3">Nucleus</location>
    </subcellularLocation>
</comment>
<comment type="similarity">
    <text evidence="3">Belongs to the TFS-II family. TFA subfamily.</text>
</comment>
<accession>Q9CZY2</accession>
<accession>A2AJR7</accession>
<accession>Q9CYP9</accession>
<sequence>MQKSCDENEGTPQNTPKADEGHPSEDPPQQAGETLQASGENVREETEGSHRGEPAEPSPEPKEDTPARHLNPEEVIRGVDELERLREEIRRVRNKFVLMHWKQRHSRSRPYPVCFRP</sequence>